<protein>
    <recommendedName>
        <fullName evidence="1">Bifunctional purine biosynthesis protein PurH</fullName>
    </recommendedName>
    <domain>
        <recommendedName>
            <fullName evidence="1">Phosphoribosylaminoimidazolecarboxamide formyltransferase</fullName>
            <ecNumber evidence="1">2.1.2.3</ecNumber>
        </recommendedName>
        <alternativeName>
            <fullName evidence="1">AICAR transformylase</fullName>
        </alternativeName>
    </domain>
    <domain>
        <recommendedName>
            <fullName evidence="1">IMP cyclohydrolase</fullName>
            <ecNumber evidence="1">3.5.4.10</ecNumber>
        </recommendedName>
        <alternativeName>
            <fullName evidence="1">ATIC</fullName>
        </alternativeName>
        <alternativeName>
            <fullName evidence="1">IMP synthase</fullName>
        </alternativeName>
        <alternativeName>
            <fullName evidence="1">Inosinicase</fullName>
        </alternativeName>
    </domain>
</protein>
<proteinExistence type="inferred from homology"/>
<sequence length="523" mass="55026">MSTDDGRRPIRRALISVYDKTGLVDLAQGLSAAGVEIISTGSTAKTIADTGIPVTPVEQLTGFPEVLDGRVKTLHPRVHAGLLADLRKSEHAAALEQLGIEAFELVVVNLYPFSQTVESGASVDDCVEQIDIGGPAMVRAAAKNHPSAAVVTDPLGYHGVLAALRAGGFTLAERKRLASLAFQHIAEYDIAVASWMQQTLAPEHPVAAFPQWFGRSWRRVAMLRYGENPHQQAALYGDPTAWPGLAQAEQLHGKDMSYNNFTDADAAWRAAFDHEQTCVAIIKHANPCGIAISSVSVADAHRKAHECDPLSAYGGVIAANTEVSVEMAEYVSTIFTEVIVAPGYAPGALDVLARKKNIRVLVAAEPLAGGSELRPISGGLLIQQSDQLDAHGDNPANWTLATGSPADPATLTDLVFAWRACRAVKSNAIVIAADGATVGVGMGQVNRVDAARLAVERGGERVRGAVAASDAFFPFPDGLETLAAAGVTAVVHPGGSVRDEEVTEAAAKAGVTLYLTGARHFAH</sequence>
<comment type="catalytic activity">
    <reaction evidence="1">
        <text>(6R)-10-formyltetrahydrofolate + 5-amino-1-(5-phospho-beta-D-ribosyl)imidazole-4-carboxamide = 5-formamido-1-(5-phospho-D-ribosyl)imidazole-4-carboxamide + (6S)-5,6,7,8-tetrahydrofolate</text>
        <dbReference type="Rhea" id="RHEA:22192"/>
        <dbReference type="ChEBI" id="CHEBI:57453"/>
        <dbReference type="ChEBI" id="CHEBI:58467"/>
        <dbReference type="ChEBI" id="CHEBI:58475"/>
        <dbReference type="ChEBI" id="CHEBI:195366"/>
        <dbReference type="EC" id="2.1.2.3"/>
    </reaction>
</comment>
<comment type="catalytic activity">
    <reaction evidence="1">
        <text>IMP + H2O = 5-formamido-1-(5-phospho-D-ribosyl)imidazole-4-carboxamide</text>
        <dbReference type="Rhea" id="RHEA:18445"/>
        <dbReference type="ChEBI" id="CHEBI:15377"/>
        <dbReference type="ChEBI" id="CHEBI:58053"/>
        <dbReference type="ChEBI" id="CHEBI:58467"/>
        <dbReference type="EC" id="3.5.4.10"/>
    </reaction>
</comment>
<comment type="pathway">
    <text evidence="1">Purine metabolism; IMP biosynthesis via de novo pathway; 5-formamido-1-(5-phospho-D-ribosyl)imidazole-4-carboxamide from 5-amino-1-(5-phospho-D-ribosyl)imidazole-4-carboxamide (10-formyl THF route): step 1/1.</text>
</comment>
<comment type="pathway">
    <text evidence="1">Purine metabolism; IMP biosynthesis via de novo pathway; IMP from 5-formamido-1-(5-phospho-D-ribosyl)imidazole-4-carboxamide: step 1/1.</text>
</comment>
<comment type="domain">
    <text evidence="1">The IMP cyclohydrolase activity resides in the N-terminal region.</text>
</comment>
<comment type="similarity">
    <text evidence="1">Belongs to the PurH family.</text>
</comment>
<feature type="chain" id="PRO_1000018914" description="Bifunctional purine biosynthesis protein PurH">
    <location>
        <begin position="1"/>
        <end position="523"/>
    </location>
</feature>
<feature type="domain" description="MGS-like" evidence="2">
    <location>
        <begin position="1"/>
        <end position="152"/>
    </location>
</feature>
<evidence type="ECO:0000255" key="1">
    <source>
        <dbReference type="HAMAP-Rule" id="MF_00139"/>
    </source>
</evidence>
<evidence type="ECO:0000255" key="2">
    <source>
        <dbReference type="PROSITE-ProRule" id="PRU01202"/>
    </source>
</evidence>
<reference key="1">
    <citation type="journal article" date="2008" name="PLoS ONE">
        <title>Genetic basis of virulence attenuation revealed by comparative genomic analysis of Mycobacterium tuberculosis strain H37Ra versus H37Rv.</title>
        <authorList>
            <person name="Zheng H."/>
            <person name="Lu L."/>
            <person name="Wang B."/>
            <person name="Pu S."/>
            <person name="Zhang X."/>
            <person name="Zhu G."/>
            <person name="Shi W."/>
            <person name="Zhang L."/>
            <person name="Wang H."/>
            <person name="Wang S."/>
            <person name="Zhao G."/>
            <person name="Zhang Y."/>
        </authorList>
    </citation>
    <scope>NUCLEOTIDE SEQUENCE [LARGE SCALE GENOMIC DNA]</scope>
    <source>
        <strain>ATCC 25177 / H37Ra</strain>
    </source>
</reference>
<organism>
    <name type="scientific">Mycobacterium tuberculosis (strain ATCC 25177 / H37Ra)</name>
    <dbReference type="NCBI Taxonomy" id="419947"/>
    <lineage>
        <taxon>Bacteria</taxon>
        <taxon>Bacillati</taxon>
        <taxon>Actinomycetota</taxon>
        <taxon>Actinomycetes</taxon>
        <taxon>Mycobacteriales</taxon>
        <taxon>Mycobacteriaceae</taxon>
        <taxon>Mycobacterium</taxon>
        <taxon>Mycobacterium tuberculosis complex</taxon>
    </lineage>
</organism>
<name>PUR9_MYCTA</name>
<keyword id="KW-0378">Hydrolase</keyword>
<keyword id="KW-0511">Multifunctional enzyme</keyword>
<keyword id="KW-0658">Purine biosynthesis</keyword>
<keyword id="KW-1185">Reference proteome</keyword>
<keyword id="KW-0808">Transferase</keyword>
<gene>
    <name evidence="1" type="primary">purH</name>
    <name type="ordered locus">MRA_0964</name>
</gene>
<accession>A5U0Z7</accession>
<dbReference type="EC" id="2.1.2.3" evidence="1"/>
<dbReference type="EC" id="3.5.4.10" evidence="1"/>
<dbReference type="EMBL" id="CP000611">
    <property type="protein sequence ID" value="ABQ72697.1"/>
    <property type="molecule type" value="Genomic_DNA"/>
</dbReference>
<dbReference type="RefSeq" id="WP_003404890.1">
    <property type="nucleotide sequence ID" value="NZ_CP016972.1"/>
</dbReference>
<dbReference type="SMR" id="A5U0Z7"/>
<dbReference type="KEGG" id="mra:MRA_0964"/>
<dbReference type="eggNOG" id="COG0138">
    <property type="taxonomic scope" value="Bacteria"/>
</dbReference>
<dbReference type="HOGENOM" id="CLU_016316_5_2_11"/>
<dbReference type="UniPathway" id="UPA00074">
    <property type="reaction ID" value="UER00133"/>
</dbReference>
<dbReference type="UniPathway" id="UPA00074">
    <property type="reaction ID" value="UER00135"/>
</dbReference>
<dbReference type="Proteomes" id="UP000001988">
    <property type="component" value="Chromosome"/>
</dbReference>
<dbReference type="GO" id="GO:0005829">
    <property type="term" value="C:cytosol"/>
    <property type="evidence" value="ECO:0007669"/>
    <property type="project" value="TreeGrafter"/>
</dbReference>
<dbReference type="GO" id="GO:0003937">
    <property type="term" value="F:IMP cyclohydrolase activity"/>
    <property type="evidence" value="ECO:0007669"/>
    <property type="project" value="UniProtKB-UniRule"/>
</dbReference>
<dbReference type="GO" id="GO:0004643">
    <property type="term" value="F:phosphoribosylaminoimidazolecarboxamide formyltransferase activity"/>
    <property type="evidence" value="ECO:0007669"/>
    <property type="project" value="UniProtKB-UniRule"/>
</dbReference>
<dbReference type="GO" id="GO:0006189">
    <property type="term" value="P:'de novo' IMP biosynthetic process"/>
    <property type="evidence" value="ECO:0007669"/>
    <property type="project" value="UniProtKB-UniRule"/>
</dbReference>
<dbReference type="CDD" id="cd01421">
    <property type="entry name" value="IMPCH"/>
    <property type="match status" value="1"/>
</dbReference>
<dbReference type="FunFam" id="3.40.140.20:FF:000001">
    <property type="entry name" value="Bifunctional purine biosynthesis protein PurH"/>
    <property type="match status" value="1"/>
</dbReference>
<dbReference type="FunFam" id="3.40.50.1380:FF:000001">
    <property type="entry name" value="Bifunctional purine biosynthesis protein PurH"/>
    <property type="match status" value="1"/>
</dbReference>
<dbReference type="Gene3D" id="3.40.140.20">
    <property type="match status" value="2"/>
</dbReference>
<dbReference type="Gene3D" id="3.40.50.1380">
    <property type="entry name" value="Methylglyoxal synthase-like domain"/>
    <property type="match status" value="1"/>
</dbReference>
<dbReference type="HAMAP" id="MF_00139">
    <property type="entry name" value="PurH"/>
    <property type="match status" value="1"/>
</dbReference>
<dbReference type="InterPro" id="IPR024051">
    <property type="entry name" value="AICAR_Tfase_dup_dom_sf"/>
</dbReference>
<dbReference type="InterPro" id="IPR016193">
    <property type="entry name" value="Cytidine_deaminase-like"/>
</dbReference>
<dbReference type="InterPro" id="IPR011607">
    <property type="entry name" value="MGS-like_dom"/>
</dbReference>
<dbReference type="InterPro" id="IPR036914">
    <property type="entry name" value="MGS-like_dom_sf"/>
</dbReference>
<dbReference type="InterPro" id="IPR002695">
    <property type="entry name" value="PurH-like"/>
</dbReference>
<dbReference type="NCBIfam" id="NF002049">
    <property type="entry name" value="PRK00881.1"/>
    <property type="match status" value="1"/>
</dbReference>
<dbReference type="NCBIfam" id="TIGR00355">
    <property type="entry name" value="purH"/>
    <property type="match status" value="1"/>
</dbReference>
<dbReference type="PANTHER" id="PTHR11692:SF0">
    <property type="entry name" value="BIFUNCTIONAL PURINE BIOSYNTHESIS PROTEIN ATIC"/>
    <property type="match status" value="1"/>
</dbReference>
<dbReference type="PANTHER" id="PTHR11692">
    <property type="entry name" value="BIFUNCTIONAL PURINE BIOSYNTHESIS PROTEIN PURH"/>
    <property type="match status" value="1"/>
</dbReference>
<dbReference type="Pfam" id="PF01808">
    <property type="entry name" value="AICARFT_IMPCHas"/>
    <property type="match status" value="1"/>
</dbReference>
<dbReference type="Pfam" id="PF02142">
    <property type="entry name" value="MGS"/>
    <property type="match status" value="1"/>
</dbReference>
<dbReference type="PIRSF" id="PIRSF000414">
    <property type="entry name" value="AICARFT_IMPCHas"/>
    <property type="match status" value="1"/>
</dbReference>
<dbReference type="SMART" id="SM00798">
    <property type="entry name" value="AICARFT_IMPCHas"/>
    <property type="match status" value="1"/>
</dbReference>
<dbReference type="SMART" id="SM00851">
    <property type="entry name" value="MGS"/>
    <property type="match status" value="1"/>
</dbReference>
<dbReference type="SUPFAM" id="SSF53927">
    <property type="entry name" value="Cytidine deaminase-like"/>
    <property type="match status" value="1"/>
</dbReference>
<dbReference type="SUPFAM" id="SSF52335">
    <property type="entry name" value="Methylglyoxal synthase-like"/>
    <property type="match status" value="1"/>
</dbReference>
<dbReference type="PROSITE" id="PS51855">
    <property type="entry name" value="MGS"/>
    <property type="match status" value="1"/>
</dbReference>